<dbReference type="EMBL" id="AB032258">
    <property type="protein sequence ID" value="BAA84470.1"/>
    <property type="molecule type" value="mRNA"/>
</dbReference>
<dbReference type="EMBL" id="FO080581">
    <property type="protein sequence ID" value="CCD64836.1"/>
    <property type="molecule type" value="Genomic_DNA"/>
</dbReference>
<dbReference type="PIR" id="T37327">
    <property type="entry name" value="T37327"/>
</dbReference>
<dbReference type="RefSeq" id="NP_495071.1">
    <property type="nucleotide sequence ID" value="NM_062670.3"/>
</dbReference>
<dbReference type="SMR" id="Q18060"/>
<dbReference type="BioGRID" id="39283">
    <property type="interactions" value="1"/>
</dbReference>
<dbReference type="FunCoup" id="Q18060">
    <property type="interactions" value="872"/>
</dbReference>
<dbReference type="IntAct" id="Q18060">
    <property type="interactions" value="1"/>
</dbReference>
<dbReference type="STRING" id="6239.C17C3.4.1"/>
<dbReference type="PaxDb" id="6239-C17C3.4"/>
<dbReference type="EnsemblMetazoa" id="C17C3.4.1">
    <property type="protein sequence ID" value="C17C3.4.1"/>
    <property type="gene ID" value="WBGene00002094"/>
</dbReference>
<dbReference type="GeneID" id="173941"/>
<dbReference type="KEGG" id="cel:CELE_C17C3.4"/>
<dbReference type="UCSC" id="C17C3.4">
    <property type="organism name" value="c. elegans"/>
</dbReference>
<dbReference type="AGR" id="WB:WBGene00002094"/>
<dbReference type="CTD" id="173941"/>
<dbReference type="WormBase" id="C17C3.4">
    <property type="protein sequence ID" value="CE04024"/>
    <property type="gene ID" value="WBGene00002094"/>
    <property type="gene designation" value="ins-11"/>
</dbReference>
<dbReference type="eggNOG" id="ENOG502TJ7G">
    <property type="taxonomic scope" value="Eukaryota"/>
</dbReference>
<dbReference type="GeneTree" id="ENSGT00970000198336"/>
<dbReference type="HOGENOM" id="CLU_187880_0_0_1"/>
<dbReference type="InParanoid" id="Q18060"/>
<dbReference type="OMA" id="RCCKENC"/>
<dbReference type="OrthoDB" id="5870153at2759"/>
<dbReference type="PhylomeDB" id="Q18060"/>
<dbReference type="PRO" id="PR:Q18060"/>
<dbReference type="Proteomes" id="UP000001940">
    <property type="component" value="Chromosome II"/>
</dbReference>
<dbReference type="Bgee" id="WBGene00002094">
    <property type="expression patterns" value="Expressed in larva and 3 other cell types or tissues"/>
</dbReference>
<dbReference type="GO" id="GO:0005576">
    <property type="term" value="C:extracellular region"/>
    <property type="evidence" value="ECO:0007669"/>
    <property type="project" value="UniProtKB-SubCell"/>
</dbReference>
<dbReference type="GO" id="GO:0045087">
    <property type="term" value="P:innate immune response"/>
    <property type="evidence" value="ECO:0007007"/>
    <property type="project" value="WormBase"/>
</dbReference>
<dbReference type="InterPro" id="IPR036438">
    <property type="entry name" value="Insulin-like_sf"/>
</dbReference>
<dbReference type="InterPro" id="IPR022353">
    <property type="entry name" value="Insulin_CS"/>
</dbReference>
<dbReference type="SUPFAM" id="SSF56994">
    <property type="entry name" value="Insulin-like"/>
    <property type="match status" value="1"/>
</dbReference>
<dbReference type="PROSITE" id="PS00262">
    <property type="entry name" value="INSULIN"/>
    <property type="match status" value="1"/>
</dbReference>
<keyword id="KW-0165">Cleavage on pair of basic residues</keyword>
<keyword id="KW-1015">Disulfide bond</keyword>
<keyword id="KW-1185">Reference proteome</keyword>
<keyword id="KW-0964">Secreted</keyword>
<keyword id="KW-0732">Signal</keyword>
<organism>
    <name type="scientific">Caenorhabditis elegans</name>
    <dbReference type="NCBI Taxonomy" id="6239"/>
    <lineage>
        <taxon>Eukaryota</taxon>
        <taxon>Metazoa</taxon>
        <taxon>Ecdysozoa</taxon>
        <taxon>Nematoda</taxon>
        <taxon>Chromadorea</taxon>
        <taxon>Rhabditida</taxon>
        <taxon>Rhabditina</taxon>
        <taxon>Rhabditomorpha</taxon>
        <taxon>Rhabditoidea</taxon>
        <taxon>Rhabditidae</taxon>
        <taxon>Peloderinae</taxon>
        <taxon>Caenorhabditis</taxon>
    </lineage>
</organism>
<name>ILG1_CAEEL</name>
<reference key="1">
    <citation type="submission" date="1999-09" db="EMBL/GenBank/DDBJ databases">
        <title>mRNA for a putative insulin-like peptide of Caenorhabditis elegans.</title>
        <authorList>
            <person name="Kawano T."/>
        </authorList>
    </citation>
    <scope>NUCLEOTIDE SEQUENCE [MRNA]</scope>
</reference>
<reference key="2">
    <citation type="journal article" date="1998" name="Science">
        <title>Genome sequence of the nematode C. elegans: a platform for investigating biology.</title>
        <authorList>
            <consortium name="The C. elegans sequencing consortium"/>
        </authorList>
    </citation>
    <scope>NUCLEOTIDE SEQUENCE [LARGE SCALE GENOMIC DNA]</scope>
    <source>
        <strain>Bristol N2</strain>
    </source>
</reference>
<reference key="3">
    <citation type="journal article" date="1998" name="Genome Res.">
        <title>New insulin-like proteins with atypical disulfide bond pattern characterized in Caenorhabditis elegans by comparative sequence analysis and homology modeling.</title>
        <authorList>
            <person name="Duret L."/>
            <person name="Guex N."/>
            <person name="Peitsch M.C."/>
            <person name="Bairoch A."/>
        </authorList>
    </citation>
    <scope>SIMILARITY TO INSULIN</scope>
</reference>
<evidence type="ECO:0000255" key="1"/>
<evidence type="ECO:0000305" key="2"/>
<protein>
    <recommendedName>
        <fullName>Probable insulin-like peptide gamma-type 1</fullName>
    </recommendedName>
    <alternativeName>
        <fullName>Ceinsulin-3</fullName>
    </alternativeName>
    <component>
        <recommendedName>
            <fullName>B-chain-like peptide</fullName>
        </recommendedName>
    </component>
    <component>
        <recommendedName>
            <fullName>A-chain-like peptide</fullName>
        </recommendedName>
    </component>
</protein>
<feature type="signal peptide" evidence="1">
    <location>
        <begin position="1"/>
        <end position="26"/>
    </location>
</feature>
<feature type="chain" id="PRO_0000016226" description="Probable insulin-like peptide gamma-type 1">
    <location>
        <begin position="27"/>
        <end position="91"/>
    </location>
</feature>
<feature type="peptide" id="PRO_0000016227" description="B-chain-like peptide" evidence="1">
    <location>
        <begin position="34"/>
        <end position="58"/>
    </location>
</feature>
<feature type="peptide" id="PRO_0000016228" description="A-chain-like peptide" evidence="1">
    <location>
        <begin position="61"/>
        <end position="91"/>
    </location>
</feature>
<feature type="disulfide bond" evidence="1">
    <location>
        <begin position="37"/>
        <end position="66"/>
    </location>
</feature>
<feature type="disulfide bond" evidence="1">
    <location>
        <begin position="49"/>
        <end position="79"/>
    </location>
</feature>
<feature type="disulfide bond" evidence="1">
    <location>
        <begin position="65"/>
        <end position="70"/>
    </location>
</feature>
<gene>
    <name type="primary">ins-11</name>
    <name type="ORF">C17C3.4</name>
</gene>
<comment type="subcellular location">
    <subcellularLocation>
        <location evidence="2">Secreted</location>
    </subcellularLocation>
</comment>
<comment type="similarity">
    <text evidence="2">Belongs to the insulin family.</text>
</comment>
<sequence length="91" mass="10173">MSSYRQTLFILIILIVIILFVNEGQGAPHHDKRHTACVLKIFKALNVMCNHEGDADVLRRTASDCCRESCSLTEMLASCTLTSSEESTRDI</sequence>
<proteinExistence type="inferred from homology"/>
<accession>Q18060</accession>